<feature type="chain" id="PRO_0000192696" description="UPF0276 protein HI_1600">
    <location>
        <begin position="1"/>
        <end position="307"/>
    </location>
</feature>
<protein>
    <recommendedName>
        <fullName>UPF0276 protein HI_1600</fullName>
    </recommendedName>
</protein>
<gene>
    <name type="ordered locus">HI_1600</name>
</gene>
<sequence>MKLQGAGLGYRRNLAEDFLQLPSNNAIQFIEVAPENWSKMGGMARYQFDQAAERFPLAVHGLSLSLGGQAPLDRELLRNTKALINQYNSSFFSEHLSYCECEGHLYDLLPMPFTEEAVKHVAQRIRDVQDFLGLQISLENTSYYLHSPTSTMNEVEFLNAIAQEADCGIHLDVNNIYVNGVNHGLLDPYIFLDQVDVKRVNYIHIAGHDEEHSAAQVVENSANESFNKVKGAYRHLPELLIDTHGEAVKGTVWDLLEYAYQRLPTIPPTLLERDFNFPPFAELYAEVEHIAQLQQKYAHTEVMSYAA</sequence>
<evidence type="ECO:0000305" key="1"/>
<name>Y1600_HAEIN</name>
<proteinExistence type="inferred from homology"/>
<organism>
    <name type="scientific">Haemophilus influenzae (strain ATCC 51907 / DSM 11121 / KW20 / Rd)</name>
    <dbReference type="NCBI Taxonomy" id="71421"/>
    <lineage>
        <taxon>Bacteria</taxon>
        <taxon>Pseudomonadati</taxon>
        <taxon>Pseudomonadota</taxon>
        <taxon>Gammaproteobacteria</taxon>
        <taxon>Pasteurellales</taxon>
        <taxon>Pasteurellaceae</taxon>
        <taxon>Haemophilus</taxon>
    </lineage>
</organism>
<dbReference type="EMBL" id="L42023">
    <property type="protein sequence ID" value="AAC23259.1"/>
    <property type="status" value="ALT_INIT"/>
    <property type="molecule type" value="Genomic_DNA"/>
</dbReference>
<dbReference type="PIR" id="H64037">
    <property type="entry name" value="H64037"/>
</dbReference>
<dbReference type="RefSeq" id="NP_439742.1">
    <property type="nucleotide sequence ID" value="NC_000907.1"/>
</dbReference>
<dbReference type="SMR" id="P44268"/>
<dbReference type="STRING" id="71421.HI_1600"/>
<dbReference type="DNASU" id="950455"/>
<dbReference type="EnsemblBacteria" id="AAC23259">
    <property type="protein sequence ID" value="AAC23259"/>
    <property type="gene ID" value="HI_1600"/>
</dbReference>
<dbReference type="KEGG" id="hin:HI_1600"/>
<dbReference type="PATRIC" id="fig|71421.8.peg.1673"/>
<dbReference type="eggNOG" id="COG3220">
    <property type="taxonomic scope" value="Bacteria"/>
</dbReference>
<dbReference type="HOGENOM" id="CLU_064263_0_0_6"/>
<dbReference type="OrthoDB" id="9763101at2"/>
<dbReference type="PhylomeDB" id="P44268"/>
<dbReference type="Proteomes" id="UP000000579">
    <property type="component" value="Chromosome"/>
</dbReference>
<dbReference type="Gene3D" id="3.20.20.150">
    <property type="entry name" value="Divalent-metal-dependent TIM barrel enzymes"/>
    <property type="match status" value="1"/>
</dbReference>
<dbReference type="HAMAP" id="MF_00697">
    <property type="entry name" value="UPF0276"/>
    <property type="match status" value="1"/>
</dbReference>
<dbReference type="InterPro" id="IPR007801">
    <property type="entry name" value="MbnB/TglH/ChrH"/>
</dbReference>
<dbReference type="InterPro" id="IPR036237">
    <property type="entry name" value="Xyl_isomerase-like_sf"/>
</dbReference>
<dbReference type="NCBIfam" id="NF003818">
    <property type="entry name" value="PRK05409.1"/>
    <property type="match status" value="1"/>
</dbReference>
<dbReference type="PANTHER" id="PTHR42194">
    <property type="entry name" value="UPF0276 PROTEIN HI_1600"/>
    <property type="match status" value="1"/>
</dbReference>
<dbReference type="PANTHER" id="PTHR42194:SF1">
    <property type="entry name" value="UPF0276 PROTEIN HI_1600"/>
    <property type="match status" value="1"/>
</dbReference>
<dbReference type="Pfam" id="PF05114">
    <property type="entry name" value="MbnB_TglH_ChrH"/>
    <property type="match status" value="1"/>
</dbReference>
<dbReference type="SUPFAM" id="SSF51658">
    <property type="entry name" value="Xylose isomerase-like"/>
    <property type="match status" value="1"/>
</dbReference>
<reference key="1">
    <citation type="journal article" date="1995" name="Science">
        <title>Whole-genome random sequencing and assembly of Haemophilus influenzae Rd.</title>
        <authorList>
            <person name="Fleischmann R.D."/>
            <person name="Adams M.D."/>
            <person name="White O."/>
            <person name="Clayton R.A."/>
            <person name="Kirkness E.F."/>
            <person name="Kerlavage A.R."/>
            <person name="Bult C.J."/>
            <person name="Tomb J.-F."/>
            <person name="Dougherty B.A."/>
            <person name="Merrick J.M."/>
            <person name="McKenney K."/>
            <person name="Sutton G.G."/>
            <person name="FitzHugh W."/>
            <person name="Fields C.A."/>
            <person name="Gocayne J.D."/>
            <person name="Scott J.D."/>
            <person name="Shirley R."/>
            <person name="Liu L.-I."/>
            <person name="Glodek A."/>
            <person name="Kelley J.M."/>
            <person name="Weidman J.F."/>
            <person name="Phillips C.A."/>
            <person name="Spriggs T."/>
            <person name="Hedblom E."/>
            <person name="Cotton M.D."/>
            <person name="Utterback T.R."/>
            <person name="Hanna M.C."/>
            <person name="Nguyen D.T."/>
            <person name="Saudek D.M."/>
            <person name="Brandon R.C."/>
            <person name="Fine L.D."/>
            <person name="Fritchman J.L."/>
            <person name="Fuhrmann J.L."/>
            <person name="Geoghagen N.S.M."/>
            <person name="Gnehm C.L."/>
            <person name="McDonald L.A."/>
            <person name="Small K.V."/>
            <person name="Fraser C.M."/>
            <person name="Smith H.O."/>
            <person name="Venter J.C."/>
        </authorList>
    </citation>
    <scope>NUCLEOTIDE SEQUENCE [LARGE SCALE GENOMIC DNA]</scope>
    <source>
        <strain>ATCC 51907 / DSM 11121 / KW20 / Rd</strain>
    </source>
</reference>
<keyword id="KW-1185">Reference proteome</keyword>
<accession>P44268</accession>
<comment type="similarity">
    <text evidence="1">Belongs to the UPF0276 family.</text>
</comment>
<comment type="sequence caution" evidence="1">
    <conflict type="erroneous initiation">
        <sequence resource="EMBL-CDS" id="AAC23259"/>
    </conflict>
</comment>